<gene>
    <name evidence="1" type="primary">groES</name>
    <name evidence="1" type="synonym">groS</name>
    <name type="synonym">hsp10</name>
</gene>
<comment type="function">
    <text evidence="1">Together with the chaperonin GroEL, plays an essential role in assisting protein folding. The GroEL-GroES system forms a nano-cage that allows encapsulation of the non-native substrate proteins and provides a physical environment optimized to promote and accelerate protein folding. GroES binds to the apical surface of the GroEL ring, thereby capping the opening of the GroEL channel.</text>
</comment>
<comment type="subunit">
    <text evidence="1">Heptamer of 7 subunits arranged in a ring. Interacts with the chaperonin GroEL.</text>
</comment>
<comment type="subcellular location">
    <subcellularLocation>
        <location evidence="1">Cytoplasm</location>
    </subcellularLocation>
</comment>
<comment type="similarity">
    <text evidence="1">Belongs to the GroES chaperonin family.</text>
</comment>
<accession>Q8GJ01</accession>
<feature type="chain" id="PRO_0000174757" description="Co-chaperonin GroES">
    <location>
        <begin position="1"/>
        <end position="90"/>
    </location>
</feature>
<reference key="1">
    <citation type="submission" date="2001-07" db="EMBL/GenBank/DDBJ databases">
        <title>Genes encoding heat shock proteins 10 and 60 from Fusobacterium nucleatum ATCC 10953.</title>
        <authorList>
            <person name="Skar C.K."/>
            <person name="Bolstad A."/>
            <person name="Bakken V."/>
        </authorList>
    </citation>
    <scope>NUCLEOTIDE SEQUENCE [GENOMIC DNA]</scope>
    <source>
        <strain>ATCC 10953 / DSM 20482 / CCUG 9126 / JCM 12990 / NCTC 10562 / 555A</strain>
    </source>
</reference>
<name>CH10_FUSNP</name>
<protein>
    <recommendedName>
        <fullName evidence="1">Co-chaperonin GroES</fullName>
    </recommendedName>
    <alternativeName>
        <fullName evidence="1">10 kDa chaperonin</fullName>
    </alternativeName>
    <alternativeName>
        <fullName evidence="1">Chaperonin-10</fullName>
        <shortName evidence="1">Cpn10</shortName>
    </alternativeName>
</protein>
<evidence type="ECO:0000255" key="1">
    <source>
        <dbReference type="HAMAP-Rule" id="MF_00580"/>
    </source>
</evidence>
<sequence length="90" mass="9828">MNIKPIGERVLLKPIKKEEKTKSGILLSSKSSNTDTKNEAEVVALGKGEKLEGIKVGDKVIFNKFSGNEIEDGDIKYLIVNADDILAVIE</sequence>
<keyword id="KW-0143">Chaperone</keyword>
<keyword id="KW-0963">Cytoplasm</keyword>
<proteinExistence type="inferred from homology"/>
<dbReference type="EMBL" id="AJ320160">
    <property type="protein sequence ID" value="CAC86117.1"/>
    <property type="molecule type" value="Genomic_DNA"/>
</dbReference>
<dbReference type="RefSeq" id="WP_005897777.1">
    <property type="nucleotide sequence ID" value="NZ_NIRQ01000001.1"/>
</dbReference>
<dbReference type="SMR" id="Q8GJ01"/>
<dbReference type="STRING" id="76857.RO02_02160"/>
<dbReference type="PATRIC" id="fig|76857.9.peg.1531"/>
<dbReference type="GO" id="GO:0005737">
    <property type="term" value="C:cytoplasm"/>
    <property type="evidence" value="ECO:0007669"/>
    <property type="project" value="UniProtKB-SubCell"/>
</dbReference>
<dbReference type="GO" id="GO:0005524">
    <property type="term" value="F:ATP binding"/>
    <property type="evidence" value="ECO:0007669"/>
    <property type="project" value="InterPro"/>
</dbReference>
<dbReference type="GO" id="GO:0046872">
    <property type="term" value="F:metal ion binding"/>
    <property type="evidence" value="ECO:0007669"/>
    <property type="project" value="TreeGrafter"/>
</dbReference>
<dbReference type="GO" id="GO:0044183">
    <property type="term" value="F:protein folding chaperone"/>
    <property type="evidence" value="ECO:0007669"/>
    <property type="project" value="InterPro"/>
</dbReference>
<dbReference type="GO" id="GO:0051087">
    <property type="term" value="F:protein-folding chaperone binding"/>
    <property type="evidence" value="ECO:0007669"/>
    <property type="project" value="TreeGrafter"/>
</dbReference>
<dbReference type="GO" id="GO:0051082">
    <property type="term" value="F:unfolded protein binding"/>
    <property type="evidence" value="ECO:0007669"/>
    <property type="project" value="TreeGrafter"/>
</dbReference>
<dbReference type="GO" id="GO:0051085">
    <property type="term" value="P:chaperone cofactor-dependent protein refolding"/>
    <property type="evidence" value="ECO:0007669"/>
    <property type="project" value="TreeGrafter"/>
</dbReference>
<dbReference type="CDD" id="cd00320">
    <property type="entry name" value="cpn10"/>
    <property type="match status" value="1"/>
</dbReference>
<dbReference type="FunFam" id="2.30.33.40:FF:000010">
    <property type="entry name" value="10 kDa chaperonin"/>
    <property type="match status" value="1"/>
</dbReference>
<dbReference type="Gene3D" id="2.30.33.40">
    <property type="entry name" value="GroES chaperonin"/>
    <property type="match status" value="1"/>
</dbReference>
<dbReference type="HAMAP" id="MF_00580">
    <property type="entry name" value="CH10"/>
    <property type="match status" value="1"/>
</dbReference>
<dbReference type="InterPro" id="IPR020818">
    <property type="entry name" value="Chaperonin_GroES"/>
</dbReference>
<dbReference type="InterPro" id="IPR037124">
    <property type="entry name" value="Chaperonin_GroES_sf"/>
</dbReference>
<dbReference type="InterPro" id="IPR018369">
    <property type="entry name" value="Chaprnonin_Cpn10_CS"/>
</dbReference>
<dbReference type="InterPro" id="IPR011032">
    <property type="entry name" value="GroES-like_sf"/>
</dbReference>
<dbReference type="PANTHER" id="PTHR10772">
    <property type="entry name" value="10 KDA HEAT SHOCK PROTEIN"/>
    <property type="match status" value="1"/>
</dbReference>
<dbReference type="PANTHER" id="PTHR10772:SF63">
    <property type="entry name" value="20 KDA CHAPERONIN, CHLOROPLASTIC"/>
    <property type="match status" value="1"/>
</dbReference>
<dbReference type="Pfam" id="PF00166">
    <property type="entry name" value="Cpn10"/>
    <property type="match status" value="1"/>
</dbReference>
<dbReference type="PRINTS" id="PR00297">
    <property type="entry name" value="CHAPERONIN10"/>
</dbReference>
<dbReference type="SMART" id="SM00883">
    <property type="entry name" value="Cpn10"/>
    <property type="match status" value="1"/>
</dbReference>
<dbReference type="SUPFAM" id="SSF50129">
    <property type="entry name" value="GroES-like"/>
    <property type="match status" value="1"/>
</dbReference>
<dbReference type="PROSITE" id="PS00681">
    <property type="entry name" value="CHAPERONINS_CPN10"/>
    <property type="match status" value="1"/>
</dbReference>
<organism>
    <name type="scientific">Fusobacterium nucleatum subsp. polymorphum</name>
    <name type="common">Fusobacterium polymorphum</name>
    <dbReference type="NCBI Taxonomy" id="76857"/>
    <lineage>
        <taxon>Bacteria</taxon>
        <taxon>Fusobacteriati</taxon>
        <taxon>Fusobacteriota</taxon>
        <taxon>Fusobacteriia</taxon>
        <taxon>Fusobacteriales</taxon>
        <taxon>Fusobacteriaceae</taxon>
        <taxon>Fusobacterium</taxon>
    </lineage>
</organism>